<dbReference type="EC" id="1.97.1.12" evidence="1"/>
<dbReference type="EMBL" id="CP000393">
    <property type="protein sequence ID" value="ABG53637.1"/>
    <property type="molecule type" value="Genomic_DNA"/>
</dbReference>
<dbReference type="RefSeq" id="WP_011613954.1">
    <property type="nucleotide sequence ID" value="NC_008312.1"/>
</dbReference>
<dbReference type="SMR" id="Q10VT7"/>
<dbReference type="STRING" id="203124.Tery_4669"/>
<dbReference type="KEGG" id="ter:Tery_4669"/>
<dbReference type="eggNOG" id="COG2885">
    <property type="taxonomic scope" value="Bacteria"/>
</dbReference>
<dbReference type="HOGENOM" id="CLU_016126_1_0_3"/>
<dbReference type="GO" id="GO:0009522">
    <property type="term" value="C:photosystem I"/>
    <property type="evidence" value="ECO:0007669"/>
    <property type="project" value="UniProtKB-KW"/>
</dbReference>
<dbReference type="GO" id="GO:0031676">
    <property type="term" value="C:plasma membrane-derived thylakoid membrane"/>
    <property type="evidence" value="ECO:0007669"/>
    <property type="project" value="UniProtKB-SubCell"/>
</dbReference>
<dbReference type="GO" id="GO:0051539">
    <property type="term" value="F:4 iron, 4 sulfur cluster binding"/>
    <property type="evidence" value="ECO:0007669"/>
    <property type="project" value="UniProtKB-KW"/>
</dbReference>
<dbReference type="GO" id="GO:0016168">
    <property type="term" value="F:chlorophyll binding"/>
    <property type="evidence" value="ECO:0007669"/>
    <property type="project" value="UniProtKB-KW"/>
</dbReference>
<dbReference type="GO" id="GO:0009055">
    <property type="term" value="F:electron transfer activity"/>
    <property type="evidence" value="ECO:0007669"/>
    <property type="project" value="UniProtKB-UniRule"/>
</dbReference>
<dbReference type="GO" id="GO:0000287">
    <property type="term" value="F:magnesium ion binding"/>
    <property type="evidence" value="ECO:0007669"/>
    <property type="project" value="UniProtKB-UniRule"/>
</dbReference>
<dbReference type="GO" id="GO:0016491">
    <property type="term" value="F:oxidoreductase activity"/>
    <property type="evidence" value="ECO:0007669"/>
    <property type="project" value="UniProtKB-KW"/>
</dbReference>
<dbReference type="GO" id="GO:0015979">
    <property type="term" value="P:photosynthesis"/>
    <property type="evidence" value="ECO:0007669"/>
    <property type="project" value="UniProtKB-UniRule"/>
</dbReference>
<dbReference type="FunFam" id="1.20.1130.10:FF:000001">
    <property type="entry name" value="Photosystem I P700 chlorophyll a apoprotein A2"/>
    <property type="match status" value="1"/>
</dbReference>
<dbReference type="Gene3D" id="1.20.1130.10">
    <property type="entry name" value="Photosystem I PsaA/PsaB"/>
    <property type="match status" value="1"/>
</dbReference>
<dbReference type="HAMAP" id="MF_00458">
    <property type="entry name" value="PSI_PsaA"/>
    <property type="match status" value="1"/>
</dbReference>
<dbReference type="InterPro" id="IPR006243">
    <property type="entry name" value="PSI_PsaA"/>
</dbReference>
<dbReference type="InterPro" id="IPR001280">
    <property type="entry name" value="PSI_PsaA/B"/>
</dbReference>
<dbReference type="InterPro" id="IPR020586">
    <property type="entry name" value="PSI_PsaA/B_CS"/>
</dbReference>
<dbReference type="InterPro" id="IPR036408">
    <property type="entry name" value="PSI_PsaA/B_sf"/>
</dbReference>
<dbReference type="NCBIfam" id="TIGR01335">
    <property type="entry name" value="psaA"/>
    <property type="match status" value="1"/>
</dbReference>
<dbReference type="PANTHER" id="PTHR30128">
    <property type="entry name" value="OUTER MEMBRANE PROTEIN, OMPA-RELATED"/>
    <property type="match status" value="1"/>
</dbReference>
<dbReference type="PANTHER" id="PTHR30128:SF19">
    <property type="entry name" value="PHOTOSYSTEM I P700 CHLOROPHYLL A APOPROTEIN A1-RELATED"/>
    <property type="match status" value="1"/>
</dbReference>
<dbReference type="Pfam" id="PF00223">
    <property type="entry name" value="PsaA_PsaB"/>
    <property type="match status" value="1"/>
</dbReference>
<dbReference type="PIRSF" id="PIRSF002905">
    <property type="entry name" value="PSI_A"/>
    <property type="match status" value="1"/>
</dbReference>
<dbReference type="PRINTS" id="PR00257">
    <property type="entry name" value="PHOTSYSPSAAB"/>
</dbReference>
<dbReference type="SUPFAM" id="SSF81558">
    <property type="entry name" value="Photosystem I subunits PsaA/PsaB"/>
    <property type="match status" value="1"/>
</dbReference>
<dbReference type="PROSITE" id="PS00419">
    <property type="entry name" value="PHOTOSYSTEM_I_PSAAB"/>
    <property type="match status" value="1"/>
</dbReference>
<name>PSAA_TRIEI</name>
<keyword id="KW-0004">4Fe-4S</keyword>
<keyword id="KW-0148">Chlorophyll</keyword>
<keyword id="KW-0157">Chromophore</keyword>
<keyword id="KW-0249">Electron transport</keyword>
<keyword id="KW-0408">Iron</keyword>
<keyword id="KW-0411">Iron-sulfur</keyword>
<keyword id="KW-0460">Magnesium</keyword>
<keyword id="KW-0472">Membrane</keyword>
<keyword id="KW-0479">Metal-binding</keyword>
<keyword id="KW-0560">Oxidoreductase</keyword>
<keyword id="KW-0602">Photosynthesis</keyword>
<keyword id="KW-0603">Photosystem I</keyword>
<keyword id="KW-0793">Thylakoid</keyword>
<keyword id="KW-0812">Transmembrane</keyword>
<keyword id="KW-1133">Transmembrane helix</keyword>
<keyword id="KW-0813">Transport</keyword>
<reference key="1">
    <citation type="journal article" date="2015" name="Proc. Natl. Acad. Sci. U.S.A.">
        <title>Trichodesmium genome maintains abundant, widespread noncoding DNA in situ, despite oligotrophic lifestyle.</title>
        <authorList>
            <person name="Walworth N."/>
            <person name="Pfreundt U."/>
            <person name="Nelson W.C."/>
            <person name="Mincer T."/>
            <person name="Heidelberg J.F."/>
            <person name="Fu F."/>
            <person name="Waterbury J.B."/>
            <person name="Glavina del Rio T."/>
            <person name="Goodwin L."/>
            <person name="Kyrpides N.C."/>
            <person name="Land M.L."/>
            <person name="Woyke T."/>
            <person name="Hutchins D.A."/>
            <person name="Hess W.R."/>
            <person name="Webb E.A."/>
        </authorList>
    </citation>
    <scope>NUCLEOTIDE SEQUENCE [LARGE SCALE GENOMIC DNA]</scope>
    <source>
        <strain>IMS101</strain>
    </source>
</reference>
<proteinExistence type="inferred from homology"/>
<protein>
    <recommendedName>
        <fullName evidence="1">Photosystem I P700 chlorophyll a apoprotein A1</fullName>
        <ecNumber evidence="1">1.97.1.12</ecNumber>
    </recommendedName>
    <alternativeName>
        <fullName evidence="1">PsaA</fullName>
    </alternativeName>
</protein>
<sequence length="753" mass="83321">MTISPPEREAKVRVTVDTDPVPTSFEKWGKPGHFSRSLARGPKTTTWIWNLHADAHDFDSHTSDLEDVSRKIFSAHFGHLAIIFVWLSGAYFHGAKFSNYEAWLADPTGIKPSAQVVWPVLGQGILNGDMGGGFHGIQITSGLFQLWRASGITNEYQLYCTAIGGLVMAALMMFAGWFHYHKKAPKLEWFQNVESMMNHHLAGLLGLGCLSWAGHQIHVSLPINKLLDSGVAPEDIPLPHEFLFNKSLMAELYPSFAKGLTPFFTLNWGEYADFLTFKGGLNPVTGGLWLSDTAHHHLALAVLFIVAGHMYRTNWGIGHSMKEILEAHKDPLIIGGEGHKGLYEALTTSWHAQLAINLAMLGSLSIIVAHHMYAMPPYPYIATDYPTQLSLFTHHMWIGGFLIVGAGAHGAIFMVRDYDPAKNVNNVLDRVIRHRDAIISHLNWVCIFLGFHSFGLYVHNDTLRALGRPQDMFSDTGIQLQPIFAQWVQNLHSLAPGNTAPNALASVSPIFGGDVLAVGGKVAMMPMTLGTADFMVHHIHAFTIHVTALILLKGVLYARNSRLIPDKSELGFRFPCDGPGRGGTCQVSGWDHVFLGLFWMYNSLSIVIFHFSWKMQSDVWGTVDPDGTVSHITYGNFAQSAVTINGWLRDFLWAQASNVITSYGSELSAYGLLFLGAHFIWAFSLMFLFSGRGYWQELIESIVWAHNKLKVAPAIQPRALSITQGRAVGVAHYLLGGIVTTWAFFLARIIAVG</sequence>
<feature type="chain" id="PRO_0000294212" description="Photosystem I P700 chlorophyll a apoprotein A1">
    <location>
        <begin position="1"/>
        <end position="753"/>
    </location>
</feature>
<feature type="transmembrane region" description="Helical; Name=I" evidence="1">
    <location>
        <begin position="72"/>
        <end position="95"/>
    </location>
</feature>
<feature type="transmembrane region" description="Helical; Name=II" evidence="1">
    <location>
        <begin position="158"/>
        <end position="181"/>
    </location>
</feature>
<feature type="transmembrane region" description="Helical; Name=III" evidence="1">
    <location>
        <begin position="197"/>
        <end position="221"/>
    </location>
</feature>
<feature type="transmembrane region" description="Helical; Name=IV" evidence="1">
    <location>
        <begin position="293"/>
        <end position="311"/>
    </location>
</feature>
<feature type="transmembrane region" description="Helical; Name=V" evidence="1">
    <location>
        <begin position="350"/>
        <end position="373"/>
    </location>
</feature>
<feature type="transmembrane region" description="Helical; Name=VI" evidence="1">
    <location>
        <begin position="389"/>
        <end position="415"/>
    </location>
</feature>
<feature type="transmembrane region" description="Helical; Name=VII" evidence="1">
    <location>
        <begin position="437"/>
        <end position="459"/>
    </location>
</feature>
<feature type="transmembrane region" description="Helical; Name=VIII" evidence="1">
    <location>
        <begin position="534"/>
        <end position="552"/>
    </location>
</feature>
<feature type="transmembrane region" description="Helical; Name=IX" evidence="1">
    <location>
        <begin position="592"/>
        <end position="613"/>
    </location>
</feature>
<feature type="transmembrane region" description="Helical; Name=X" evidence="1">
    <location>
        <begin position="667"/>
        <end position="689"/>
    </location>
</feature>
<feature type="transmembrane region" description="Helical; Name=XI" evidence="1">
    <location>
        <begin position="727"/>
        <end position="747"/>
    </location>
</feature>
<feature type="binding site" evidence="1">
    <location>
        <position position="576"/>
    </location>
    <ligand>
        <name>[4Fe-4S] cluster</name>
        <dbReference type="ChEBI" id="CHEBI:49883"/>
        <note>ligand shared between dimeric partners</note>
    </ligand>
</feature>
<feature type="binding site" evidence="1">
    <location>
        <position position="585"/>
    </location>
    <ligand>
        <name>[4Fe-4S] cluster</name>
        <dbReference type="ChEBI" id="CHEBI:49883"/>
        <note>ligand shared between dimeric partners</note>
    </ligand>
</feature>
<feature type="binding site" description="axial binding residue" evidence="1">
    <location>
        <position position="678"/>
    </location>
    <ligand>
        <name>chlorophyll a'</name>
        <dbReference type="ChEBI" id="CHEBI:189419"/>
        <label>A1</label>
    </ligand>
    <ligandPart>
        <name>Mg</name>
        <dbReference type="ChEBI" id="CHEBI:25107"/>
    </ligandPart>
</feature>
<feature type="binding site" description="axial binding residue" evidence="1">
    <location>
        <position position="686"/>
    </location>
    <ligand>
        <name>chlorophyll a</name>
        <dbReference type="ChEBI" id="CHEBI:58416"/>
        <label>A3</label>
    </ligand>
    <ligandPart>
        <name>Mg</name>
        <dbReference type="ChEBI" id="CHEBI:25107"/>
    </ligandPart>
</feature>
<feature type="binding site" evidence="1">
    <location>
        <position position="694"/>
    </location>
    <ligand>
        <name>chlorophyll a</name>
        <dbReference type="ChEBI" id="CHEBI:58416"/>
        <label>A3</label>
    </ligand>
</feature>
<feature type="binding site" evidence="1">
    <location>
        <position position="695"/>
    </location>
    <ligand>
        <name>phylloquinone</name>
        <dbReference type="ChEBI" id="CHEBI:18067"/>
        <label>A</label>
    </ligand>
</feature>
<evidence type="ECO:0000255" key="1">
    <source>
        <dbReference type="HAMAP-Rule" id="MF_00458"/>
    </source>
</evidence>
<accession>Q10VT7</accession>
<organism>
    <name type="scientific">Trichodesmium erythraeum (strain IMS101)</name>
    <dbReference type="NCBI Taxonomy" id="203124"/>
    <lineage>
        <taxon>Bacteria</taxon>
        <taxon>Bacillati</taxon>
        <taxon>Cyanobacteriota</taxon>
        <taxon>Cyanophyceae</taxon>
        <taxon>Oscillatoriophycideae</taxon>
        <taxon>Oscillatoriales</taxon>
        <taxon>Microcoleaceae</taxon>
        <taxon>Trichodesmium</taxon>
    </lineage>
</organism>
<comment type="function">
    <text evidence="1">PsaA and PsaB bind P700, the primary electron donor of photosystem I (PSI), as well as the electron acceptors A0, A1 and FX. PSI is a plastocyanin/cytochrome c6-ferredoxin oxidoreductase, converting photonic excitation into a charge separation, which transfers an electron from the donor P700 chlorophyll pair to the spectroscopically characterized acceptors A0, A1, FX, FA and FB in turn. Oxidized P700 is reduced on the lumenal side of the thylakoid membrane by plastocyanin or cytochrome c6.</text>
</comment>
<comment type="catalytic activity">
    <reaction evidence="1">
        <text>reduced [plastocyanin] + hnu + oxidized [2Fe-2S]-[ferredoxin] = oxidized [plastocyanin] + reduced [2Fe-2S]-[ferredoxin]</text>
        <dbReference type="Rhea" id="RHEA:30407"/>
        <dbReference type="Rhea" id="RHEA-COMP:10000"/>
        <dbReference type="Rhea" id="RHEA-COMP:10001"/>
        <dbReference type="Rhea" id="RHEA-COMP:10039"/>
        <dbReference type="Rhea" id="RHEA-COMP:10040"/>
        <dbReference type="ChEBI" id="CHEBI:29036"/>
        <dbReference type="ChEBI" id="CHEBI:30212"/>
        <dbReference type="ChEBI" id="CHEBI:33737"/>
        <dbReference type="ChEBI" id="CHEBI:33738"/>
        <dbReference type="ChEBI" id="CHEBI:49552"/>
        <dbReference type="EC" id="1.97.1.12"/>
    </reaction>
</comment>
<comment type="cofactor">
    <text evidence="1">PSI electron transfer chain: 5 chlorophyll a, 1 chlorophyll a', 2 phylloquinones and 3 4Fe-4S clusters. PSI core antenna: 90 chlorophyll a, 22 carotenoids, 3 phospholipids and 1 galactolipid. P700 is a chlorophyll a/chlorophyll a' dimer, A0 is one or more chlorophyll a, A1 is one or both phylloquinones and FX is a shared 4Fe-4S iron-sulfur center.</text>
</comment>
<comment type="subunit">
    <text evidence="1">The PsaA/B heterodimer binds the P700 chlorophyll special pair and subsequent electron acceptors. PSI consists of a core antenna complex that captures photons, and an electron transfer chain that converts photonic excitation into a charge separation. The cyanobacterial PSI reaction center is composed of one copy each of PsaA,B,C,D,E,F,I,J,K,L,M and X, and forms trimeric complexes.</text>
</comment>
<comment type="subcellular location">
    <subcellularLocation>
        <location evidence="1">Cellular thylakoid membrane</location>
        <topology evidence="1">Multi-pass membrane protein</topology>
    </subcellularLocation>
</comment>
<comment type="similarity">
    <text evidence="1">Belongs to the PsaA/PsaB family.</text>
</comment>
<gene>
    <name evidence="1" type="primary">psaA</name>
    <name type="ordered locus">Tery_4669</name>
</gene>